<reference key="1">
    <citation type="journal article" date="2011" name="Stand. Genomic Sci.">
        <title>Complete genome sequence of Rhodospirillum rubrum type strain (S1).</title>
        <authorList>
            <person name="Munk A.C."/>
            <person name="Copeland A."/>
            <person name="Lucas S."/>
            <person name="Lapidus A."/>
            <person name="Del Rio T.G."/>
            <person name="Barry K."/>
            <person name="Detter J.C."/>
            <person name="Hammon N."/>
            <person name="Israni S."/>
            <person name="Pitluck S."/>
            <person name="Brettin T."/>
            <person name="Bruce D."/>
            <person name="Han C."/>
            <person name="Tapia R."/>
            <person name="Gilna P."/>
            <person name="Schmutz J."/>
            <person name="Larimer F."/>
            <person name="Land M."/>
            <person name="Kyrpides N.C."/>
            <person name="Mavromatis K."/>
            <person name="Richardson P."/>
            <person name="Rohde M."/>
            <person name="Goeker M."/>
            <person name="Klenk H.P."/>
            <person name="Zhang Y."/>
            <person name="Roberts G.P."/>
            <person name="Reslewic S."/>
            <person name="Schwartz D.C."/>
        </authorList>
    </citation>
    <scope>NUCLEOTIDE SEQUENCE [LARGE SCALE GENOMIC DNA]</scope>
    <source>
        <strain>ATCC 11170 / ATH 1.1.1 / DSM 467 / LMG 4362 / NCIMB 8255 / S1</strain>
    </source>
</reference>
<reference key="2">
    <citation type="journal article" date="2019" name="Cell Chem. Biol.">
        <title>A soluble metabolon synthesizes the isoprenoid lipid ubiquinone.</title>
        <authorList>
            <person name="Hajj Chehade M."/>
            <person name="Pelosi L."/>
            <person name="Fyfe C.D."/>
            <person name="Loiseau L."/>
            <person name="Rascalou B."/>
            <person name="Brugiere S."/>
            <person name="Kazemzadeh K."/>
            <person name="Vo C.D."/>
            <person name="Ciccone L."/>
            <person name="Aussel L."/>
            <person name="Coute Y."/>
            <person name="Fontecave M."/>
            <person name="Barras F."/>
            <person name="Lombard M."/>
            <person name="Pierrel F."/>
        </authorList>
    </citation>
    <scope>FUNCTION</scope>
    <scope>CATALYTIC ACTIVITY</scope>
    <scope>PATHWAY</scope>
</reference>
<keyword id="KW-0274">FAD</keyword>
<keyword id="KW-0285">Flavoprotein</keyword>
<keyword id="KW-0503">Monooxygenase</keyword>
<keyword id="KW-0560">Oxidoreductase</keyword>
<keyword id="KW-1185">Reference proteome</keyword>
<keyword id="KW-0831">Ubiquinone biosynthesis</keyword>
<proteinExistence type="evidence at protein level"/>
<dbReference type="EC" id="1.14.13.-" evidence="6"/>
<dbReference type="EC" id="1.14.13.240" evidence="6"/>
<dbReference type="EMBL" id="CP000230">
    <property type="protein sequence ID" value="ABC24501.1"/>
    <property type="molecule type" value="Genomic_DNA"/>
</dbReference>
<dbReference type="RefSeq" id="WP_011391454.1">
    <property type="nucleotide sequence ID" value="NC_007643.1"/>
</dbReference>
<dbReference type="RefSeq" id="YP_428788.1">
    <property type="nucleotide sequence ID" value="NC_007643.1"/>
</dbReference>
<dbReference type="SMR" id="Q2RMZ4"/>
<dbReference type="STRING" id="269796.Rru_A3707"/>
<dbReference type="EnsemblBacteria" id="ABC24501">
    <property type="protein sequence ID" value="ABC24501"/>
    <property type="gene ID" value="Rru_A3707"/>
</dbReference>
<dbReference type="KEGG" id="rru:Rru_A3707"/>
<dbReference type="PATRIC" id="fig|269796.9.peg.3832"/>
<dbReference type="eggNOG" id="COG0654">
    <property type="taxonomic scope" value="Bacteria"/>
</dbReference>
<dbReference type="HOGENOM" id="CLU_009665_8_1_5"/>
<dbReference type="PhylomeDB" id="Q2RMZ4"/>
<dbReference type="BioCyc" id="MetaCyc:MONOMER-20130"/>
<dbReference type="UniPathway" id="UPA00232"/>
<dbReference type="Proteomes" id="UP000001929">
    <property type="component" value="Chromosome"/>
</dbReference>
<dbReference type="GO" id="GO:0071949">
    <property type="term" value="F:FAD binding"/>
    <property type="evidence" value="ECO:0007669"/>
    <property type="project" value="InterPro"/>
</dbReference>
<dbReference type="GO" id="GO:0004497">
    <property type="term" value="F:monooxygenase activity"/>
    <property type="evidence" value="ECO:0007669"/>
    <property type="project" value="UniProtKB-KW"/>
</dbReference>
<dbReference type="GO" id="GO:0016705">
    <property type="term" value="F:oxidoreductase activity, acting on paired donors, with incorporation or reduction of molecular oxygen"/>
    <property type="evidence" value="ECO:0007669"/>
    <property type="project" value="InterPro"/>
</dbReference>
<dbReference type="GO" id="GO:0006744">
    <property type="term" value="P:ubiquinone biosynthetic process"/>
    <property type="evidence" value="ECO:0007669"/>
    <property type="project" value="UniProtKB-UniPathway"/>
</dbReference>
<dbReference type="FunFam" id="3.50.50.60:FF:000021">
    <property type="entry name" value="Ubiquinone biosynthesis monooxygenase COQ6"/>
    <property type="match status" value="1"/>
</dbReference>
<dbReference type="Gene3D" id="3.50.50.60">
    <property type="entry name" value="FAD/NAD(P)-binding domain"/>
    <property type="match status" value="2"/>
</dbReference>
<dbReference type="InterPro" id="IPR002938">
    <property type="entry name" value="FAD-bd"/>
</dbReference>
<dbReference type="InterPro" id="IPR036188">
    <property type="entry name" value="FAD/NAD-bd_sf"/>
</dbReference>
<dbReference type="InterPro" id="IPR018168">
    <property type="entry name" value="Ubi_Hdrlase_CS"/>
</dbReference>
<dbReference type="InterPro" id="IPR010971">
    <property type="entry name" value="UbiH/COQ6"/>
</dbReference>
<dbReference type="InterPro" id="IPR051205">
    <property type="entry name" value="UbiH/COQ6_monooxygenase"/>
</dbReference>
<dbReference type="NCBIfam" id="TIGR01988">
    <property type="entry name" value="Ubi-OHases"/>
    <property type="match status" value="1"/>
</dbReference>
<dbReference type="PANTHER" id="PTHR43876">
    <property type="entry name" value="UBIQUINONE BIOSYNTHESIS MONOOXYGENASE COQ6, MITOCHONDRIAL"/>
    <property type="match status" value="1"/>
</dbReference>
<dbReference type="PANTHER" id="PTHR43876:SF7">
    <property type="entry name" value="UBIQUINONE BIOSYNTHESIS MONOOXYGENASE COQ6, MITOCHONDRIAL"/>
    <property type="match status" value="1"/>
</dbReference>
<dbReference type="Pfam" id="PF01494">
    <property type="entry name" value="FAD_binding_3"/>
    <property type="match status" value="1"/>
</dbReference>
<dbReference type="PRINTS" id="PR00420">
    <property type="entry name" value="RNGMNOXGNASE"/>
</dbReference>
<dbReference type="SUPFAM" id="SSF51905">
    <property type="entry name" value="FAD/NAD(P)-binding domain"/>
    <property type="match status" value="1"/>
</dbReference>
<dbReference type="PROSITE" id="PS01304">
    <property type="entry name" value="UBIH"/>
    <property type="match status" value="1"/>
</dbReference>
<gene>
    <name evidence="4" type="primary">ubiL</name>
    <name evidence="7" type="ordered locus">Rru_A3707</name>
</gene>
<evidence type="ECO:0000250" key="1">
    <source>
        <dbReference type="UniProtKB" id="P25535"/>
    </source>
</evidence>
<evidence type="ECO:0000256" key="2">
    <source>
        <dbReference type="SAM" id="MobiDB-lite"/>
    </source>
</evidence>
<evidence type="ECO:0000269" key="3">
    <source>
    </source>
</evidence>
<evidence type="ECO:0000303" key="4">
    <source>
    </source>
</evidence>
<evidence type="ECO:0000305" key="5"/>
<evidence type="ECO:0000305" key="6">
    <source>
    </source>
</evidence>
<evidence type="ECO:0000312" key="7">
    <source>
        <dbReference type="EMBL" id="ABC24501.1"/>
    </source>
</evidence>
<protein>
    <recommendedName>
        <fullName evidence="5">Ubiquinone hydroxylase UbiL</fullName>
        <shortName evidence="4">UQ hydroxylase</shortName>
    </recommendedName>
    <alternativeName>
        <fullName evidence="5">2-polyprenyl-6-methoxyphenol hydroxylase</fullName>
        <ecNumber evidence="6">1.14.13.-</ecNumber>
    </alternativeName>
    <alternativeName>
        <fullName evidence="5">2-polyprenylphenol hydroxylase</fullName>
        <ecNumber evidence="6">1.14.13.240</ecNumber>
    </alternativeName>
</protein>
<organism>
    <name type="scientific">Rhodospirillum rubrum (strain ATCC 11170 / ATH 1.1.1 / DSM 467 / LMG 4362 / NCIMB 8255 / S1)</name>
    <dbReference type="NCBI Taxonomy" id="269796"/>
    <lineage>
        <taxon>Bacteria</taxon>
        <taxon>Pseudomonadati</taxon>
        <taxon>Pseudomonadota</taxon>
        <taxon>Alphaproteobacteria</taxon>
        <taxon>Rhodospirillales</taxon>
        <taxon>Rhodospirillaceae</taxon>
        <taxon>Rhodospirillum</taxon>
    </lineage>
</organism>
<accession>Q2RMZ4</accession>
<sequence length="429" mass="45618">MSEPLLRGLAAGDPPSATGPVTGSADKVADVLIVGGGLVGGTLACALAEKGVSVVVIDGEDPEALLAAGYDGRCSAIALACQRLLDTIGLWDLLGGESQPILDIRVVDGGSPLFLHYAQAEAQGPMGYMVENRLLRQAILTRLGRLPAATLLAPARMTALRRDLDGVSATLSDGQTVRARLVVGADGRRSQVRESAGIGIRTLGYGQTAIVLTVEHERSHRGCAVEHFLPAGPFAILPMPGNRSSLVWTERSDLVPGLLALPAEHFQAELERRFGDHLGWVRPVGPRFSYRLTLQAANRYVDHRLALVGDAAHGMHPVAGQGMNYGLRDVAVLAERLVAAQRLGLDPGAPALLAEYEALRRPDNLLMLAITDALVRLFSNDIAPVALARRLGIGAVERMGPLKRLFMRHAMGTLKLGPEPPRLMRGVPL</sequence>
<comment type="function">
    <text evidence="3">Catalyzes the hydroxylation of two positions of the aromatic ring during ubiquinone biosynthesis.</text>
</comment>
<comment type="catalytic activity">
    <reaction evidence="6">
        <text>a 2-(all-trans-polyprenyl)phenol + NADPH + O2 + H(+) = a 3-(all-trans-polyprenyl)benzene-1,2-diol + NADP(+) + H2O</text>
        <dbReference type="Rhea" id="RHEA:55892"/>
        <dbReference type="Rhea" id="RHEA-COMP:9516"/>
        <dbReference type="Rhea" id="RHEA-COMP:9550"/>
        <dbReference type="ChEBI" id="CHEBI:1269"/>
        <dbReference type="ChEBI" id="CHEBI:15377"/>
        <dbReference type="ChEBI" id="CHEBI:15378"/>
        <dbReference type="ChEBI" id="CHEBI:15379"/>
        <dbReference type="ChEBI" id="CHEBI:57783"/>
        <dbReference type="ChEBI" id="CHEBI:58349"/>
        <dbReference type="ChEBI" id="CHEBI:62729"/>
        <dbReference type="EC" id="1.14.13.240"/>
    </reaction>
</comment>
<comment type="cofactor">
    <cofactor evidence="1">
        <name>FAD</name>
        <dbReference type="ChEBI" id="CHEBI:57692"/>
    </cofactor>
</comment>
<comment type="pathway">
    <text evidence="3">Cofactor biosynthesis; ubiquinone biosynthesis.</text>
</comment>
<comment type="similarity">
    <text evidence="5">Belongs to the UbiH/COQ6 family.</text>
</comment>
<name>UBIL_RHORT</name>
<feature type="chain" id="PRO_0000447677" description="Ubiquinone hydroxylase UbiL">
    <location>
        <begin position="1"/>
        <end position="429"/>
    </location>
</feature>
<feature type="region of interest" description="Disordered" evidence="2">
    <location>
        <begin position="1"/>
        <end position="22"/>
    </location>
</feature>